<protein>
    <recommendedName>
        <fullName>Olfactory receptor 5B2</fullName>
    </recommendedName>
    <alternativeName>
        <fullName>OST073</fullName>
    </alternativeName>
    <alternativeName>
        <fullName>Olfactory receptor OR11-240</fullName>
    </alternativeName>
</protein>
<gene>
    <name type="primary">OR5B2</name>
</gene>
<sequence length="309" mass="34568">MENCTEVTKFILLGLTSVPELQIPLFILFTFIYLLTLCGNLGMMLLILMDSCLHTPMYFFLSNLSLVDFGYSSAVTPKVMAGFLRGDKVISYNACAVQMFFFVALATVENYLLASMAYDRYAAVCKPLHYTTTMTASVGACLALGSYVCGFLNASFHIGGIFSLSFCKSNLVHHFFCDVPAVMALSCSDKHTSEVILVFMSSFNIFFVLLVIFISYLFIFITILKMHSAKGHQKALSTCASHFTAVSVFYGTVIFIYLQPSSSHSMDTDKMASVFYAMIIPMLNPVVYSLRNREVQNAFKKVLRRQKFL</sequence>
<name>OR5B2_HUMAN</name>
<reference key="1">
    <citation type="submission" date="2001-07" db="EMBL/GenBank/DDBJ databases">
        <title>Genome-wide discovery and analysis of human seven transmembrane helix receptor genes.</title>
        <authorList>
            <person name="Suwa M."/>
            <person name="Sato T."/>
            <person name="Okouchi I."/>
            <person name="Arita M."/>
            <person name="Futami K."/>
            <person name="Matsumoto S."/>
            <person name="Tsutsumi S."/>
            <person name="Aburatani H."/>
            <person name="Asai K."/>
            <person name="Akiyama Y."/>
        </authorList>
    </citation>
    <scope>NUCLEOTIDE SEQUENCE [GENOMIC DNA]</scope>
</reference>
<reference key="2">
    <citation type="submission" date="2005-07" db="EMBL/GenBank/DDBJ databases">
        <authorList>
            <person name="Mural R.J."/>
            <person name="Istrail S."/>
            <person name="Sutton G.G."/>
            <person name="Florea L."/>
            <person name="Halpern A.L."/>
            <person name="Mobarry C.M."/>
            <person name="Lippert R."/>
            <person name="Walenz B."/>
            <person name="Shatkay H."/>
            <person name="Dew I."/>
            <person name="Miller J.R."/>
            <person name="Flanigan M.J."/>
            <person name="Edwards N.J."/>
            <person name="Bolanos R."/>
            <person name="Fasulo D."/>
            <person name="Halldorsson B.V."/>
            <person name="Hannenhalli S."/>
            <person name="Turner R."/>
            <person name="Yooseph S."/>
            <person name="Lu F."/>
            <person name="Nusskern D.R."/>
            <person name="Shue B.C."/>
            <person name="Zheng X.H."/>
            <person name="Zhong F."/>
            <person name="Delcher A.L."/>
            <person name="Huson D.H."/>
            <person name="Kravitz S.A."/>
            <person name="Mouchard L."/>
            <person name="Reinert K."/>
            <person name="Remington K.A."/>
            <person name="Clark A.G."/>
            <person name="Waterman M.S."/>
            <person name="Eichler E.E."/>
            <person name="Adams M.D."/>
            <person name="Hunkapiller M.W."/>
            <person name="Myers E.W."/>
            <person name="Venter J.C."/>
        </authorList>
    </citation>
    <scope>NUCLEOTIDE SEQUENCE [LARGE SCALE GENOMIC DNA]</scope>
</reference>
<reference key="3">
    <citation type="journal article" date="2004" name="Genome Res.">
        <title>The status, quality, and expansion of the NIH full-length cDNA project: the Mammalian Gene Collection (MGC).</title>
        <authorList>
            <consortium name="The MGC Project Team"/>
        </authorList>
    </citation>
    <scope>NUCLEOTIDE SEQUENCE [LARGE SCALE MRNA]</scope>
    <scope>VARIANT THR-200</scope>
    <source>
        <tissue>Testis</tissue>
    </source>
</reference>
<reference key="4">
    <citation type="journal article" date="2002" name="Genomics">
        <title>DEFOG: a practical scheme for deciphering families of genes.</title>
        <authorList>
            <person name="Fuchs T."/>
            <person name="Malecova B."/>
            <person name="Linhart C."/>
            <person name="Sharan R."/>
            <person name="Khen M."/>
            <person name="Herwig R."/>
            <person name="Shmulevich D."/>
            <person name="Elkon R."/>
            <person name="Steinfath M."/>
            <person name="O'Brien J.K."/>
            <person name="Radelof U."/>
            <person name="Lehrach H."/>
            <person name="Lancet D."/>
            <person name="Shamir R."/>
        </authorList>
    </citation>
    <scope>NUCLEOTIDE SEQUENCE [GENOMIC DNA] OF 66-281</scope>
    <scope>VARIANT THR-200</scope>
</reference>
<reference key="5">
    <citation type="journal article" date="2004" name="Proc. Natl. Acad. Sci. U.S.A.">
        <title>The human olfactory receptor gene family.</title>
        <authorList>
            <person name="Malnic B."/>
            <person name="Godfrey P.A."/>
            <person name="Buck L.B."/>
        </authorList>
    </citation>
    <scope>IDENTIFICATION</scope>
</reference>
<reference key="6">
    <citation type="journal article" date="2004" name="Proc. Natl. Acad. Sci. U.S.A.">
        <authorList>
            <person name="Malnic B."/>
            <person name="Godfrey P.A."/>
            <person name="Buck L.B."/>
        </authorList>
    </citation>
    <scope>ERRATUM OF PUBMED:14983052</scope>
</reference>
<accession>Q96R09</accession>
<accession>B2RNJ6</accession>
<accession>B9EGY7</accession>
<accession>Q6IEV7</accession>
<accession>Q8NGF5</accession>
<feature type="chain" id="PRO_0000150585" description="Olfactory receptor 5B2">
    <location>
        <begin position="1"/>
        <end position="309"/>
    </location>
</feature>
<feature type="topological domain" description="Extracellular" evidence="1">
    <location>
        <begin position="1"/>
        <end position="23"/>
    </location>
</feature>
<feature type="transmembrane region" description="Helical; Name=1" evidence="1">
    <location>
        <begin position="24"/>
        <end position="47"/>
    </location>
</feature>
<feature type="topological domain" description="Cytoplasmic" evidence="1">
    <location>
        <begin position="48"/>
        <end position="55"/>
    </location>
</feature>
<feature type="transmembrane region" description="Helical; Name=2" evidence="1">
    <location>
        <begin position="56"/>
        <end position="77"/>
    </location>
</feature>
<feature type="topological domain" description="Extracellular" evidence="1">
    <location>
        <begin position="78"/>
        <end position="98"/>
    </location>
</feature>
<feature type="transmembrane region" description="Helical; Name=3" evidence="1">
    <location>
        <begin position="99"/>
        <end position="118"/>
    </location>
</feature>
<feature type="topological domain" description="Cytoplasmic" evidence="1">
    <location>
        <begin position="119"/>
        <end position="137"/>
    </location>
</feature>
<feature type="transmembrane region" description="Helical; Name=4" evidence="1">
    <location>
        <begin position="138"/>
        <end position="156"/>
    </location>
</feature>
<feature type="topological domain" description="Extracellular" evidence="1">
    <location>
        <begin position="157"/>
        <end position="193"/>
    </location>
</feature>
<feature type="transmembrane region" description="Helical; Name=5" evidence="1">
    <location>
        <begin position="194"/>
        <end position="217"/>
    </location>
</feature>
<feature type="topological domain" description="Cytoplasmic" evidence="1">
    <location>
        <begin position="218"/>
        <end position="234"/>
    </location>
</feature>
<feature type="transmembrane region" description="Helical; Name=6" evidence="1">
    <location>
        <begin position="235"/>
        <end position="257"/>
    </location>
</feature>
<feature type="topological domain" description="Extracellular" evidence="1">
    <location>
        <begin position="258"/>
        <end position="270"/>
    </location>
</feature>
<feature type="transmembrane region" description="Helical; Name=7" evidence="1">
    <location>
        <begin position="271"/>
        <end position="290"/>
    </location>
</feature>
<feature type="topological domain" description="Cytoplasmic" evidence="1">
    <location>
        <begin position="291"/>
        <end position="309"/>
    </location>
</feature>
<feature type="glycosylation site" description="N-linked (GlcNAc...) asparagine" evidence="1">
    <location>
        <position position="3"/>
    </location>
</feature>
<feature type="disulfide bond" evidence="2">
    <location>
        <begin position="95"/>
        <end position="187"/>
    </location>
</feature>
<feature type="sequence variant" id="VAR_053181" description="In dbSNP:rs4298923." evidence="3 4">
    <original>M</original>
    <variation>T</variation>
    <location>
        <position position="200"/>
    </location>
</feature>
<feature type="sequence variant" id="VAR_053182" description="In dbSNP:rs10466659.">
    <original>V</original>
    <variation>A</variation>
    <location>
        <position position="208"/>
    </location>
</feature>
<evidence type="ECO:0000255" key="1"/>
<evidence type="ECO:0000255" key="2">
    <source>
        <dbReference type="PROSITE-ProRule" id="PRU00521"/>
    </source>
</evidence>
<evidence type="ECO:0000269" key="3">
    <source>
    </source>
</evidence>
<evidence type="ECO:0000269" key="4">
    <source>
    </source>
</evidence>
<evidence type="ECO:0000305" key="5"/>
<keyword id="KW-1003">Cell membrane</keyword>
<keyword id="KW-1015">Disulfide bond</keyword>
<keyword id="KW-0297">G-protein coupled receptor</keyword>
<keyword id="KW-0325">Glycoprotein</keyword>
<keyword id="KW-0472">Membrane</keyword>
<keyword id="KW-0552">Olfaction</keyword>
<keyword id="KW-0675">Receptor</keyword>
<keyword id="KW-1185">Reference proteome</keyword>
<keyword id="KW-0716">Sensory transduction</keyword>
<keyword id="KW-0807">Transducer</keyword>
<keyword id="KW-0812">Transmembrane</keyword>
<keyword id="KW-1133">Transmembrane helix</keyword>
<dbReference type="EMBL" id="AB065852">
    <property type="protein sequence ID" value="BAC06070.1"/>
    <property type="molecule type" value="Genomic_DNA"/>
</dbReference>
<dbReference type="EMBL" id="CH471076">
    <property type="protein sequence ID" value="EAW73805.1"/>
    <property type="molecule type" value="Genomic_DNA"/>
</dbReference>
<dbReference type="EMBL" id="BC136922">
    <property type="protein sequence ID" value="AAI36923.1"/>
    <property type="molecule type" value="mRNA"/>
</dbReference>
<dbReference type="EMBL" id="BC136923">
    <property type="protein sequence ID" value="AAI36924.1"/>
    <property type="molecule type" value="mRNA"/>
</dbReference>
<dbReference type="EMBL" id="AF399636">
    <property type="protein sequence ID" value="AAK95121.1"/>
    <property type="molecule type" value="Genomic_DNA"/>
</dbReference>
<dbReference type="EMBL" id="BK004505">
    <property type="protein sequence ID" value="DAA04903.1"/>
    <property type="molecule type" value="Genomic_DNA"/>
</dbReference>
<dbReference type="CCDS" id="CCDS31550.1"/>
<dbReference type="RefSeq" id="NP_001005566.1">
    <property type="nucleotide sequence ID" value="NM_001005566.3"/>
</dbReference>
<dbReference type="SMR" id="Q96R09"/>
<dbReference type="BioGRID" id="133436">
    <property type="interactions" value="1"/>
</dbReference>
<dbReference type="FunCoup" id="Q96R09">
    <property type="interactions" value="418"/>
</dbReference>
<dbReference type="STRING" id="9606.ENSP00000493419"/>
<dbReference type="GlyCosmos" id="Q96R09">
    <property type="glycosylation" value="1 site, No reported glycans"/>
</dbReference>
<dbReference type="GlyGen" id="Q96R09">
    <property type="glycosylation" value="1 site"/>
</dbReference>
<dbReference type="BioMuta" id="OR5B2"/>
<dbReference type="DMDM" id="38372840"/>
<dbReference type="PaxDb" id="9606-ENSP00000303076"/>
<dbReference type="Antibodypedia" id="77804">
    <property type="antibodies" value="4 antibodies from 4 providers"/>
</dbReference>
<dbReference type="DNASU" id="390190"/>
<dbReference type="Ensembl" id="ENST00000302581.2">
    <property type="protein sequence ID" value="ENSP00000303076.2"/>
    <property type="gene ID" value="ENSG00000172365.4"/>
</dbReference>
<dbReference type="Ensembl" id="ENST00000641342.2">
    <property type="protein sequence ID" value="ENSP00000493419.1"/>
    <property type="gene ID" value="ENSG00000172365.4"/>
</dbReference>
<dbReference type="GeneID" id="390190"/>
<dbReference type="KEGG" id="hsa:390190"/>
<dbReference type="MANE-Select" id="ENST00000641342.2">
    <property type="protein sequence ID" value="ENSP00000493419.1"/>
    <property type="RefSeq nucleotide sequence ID" value="NM_001005566.3"/>
    <property type="RefSeq protein sequence ID" value="NP_001005566.1"/>
</dbReference>
<dbReference type="UCSC" id="uc010rkg.2">
    <property type="organism name" value="human"/>
</dbReference>
<dbReference type="AGR" id="HGNC:8323"/>
<dbReference type="CTD" id="390190"/>
<dbReference type="DisGeNET" id="390190"/>
<dbReference type="GeneCards" id="OR5B2"/>
<dbReference type="HGNC" id="HGNC:8323">
    <property type="gene designation" value="OR5B2"/>
</dbReference>
<dbReference type="HPA" id="ENSG00000172365">
    <property type="expression patterns" value="Not detected"/>
</dbReference>
<dbReference type="neXtProt" id="NX_Q96R09"/>
<dbReference type="PharmGKB" id="PA32490"/>
<dbReference type="VEuPathDB" id="HostDB:ENSG00000172365"/>
<dbReference type="eggNOG" id="ENOG502QVH7">
    <property type="taxonomic scope" value="Eukaryota"/>
</dbReference>
<dbReference type="GeneTree" id="ENSGT01120000271832"/>
<dbReference type="HOGENOM" id="CLU_012526_8_1_1"/>
<dbReference type="InParanoid" id="Q96R09"/>
<dbReference type="OMA" id="CKSNTVH"/>
<dbReference type="OrthoDB" id="9445914at2759"/>
<dbReference type="PAN-GO" id="Q96R09">
    <property type="GO annotations" value="4 GO annotations based on evolutionary models"/>
</dbReference>
<dbReference type="PhylomeDB" id="Q96R09"/>
<dbReference type="TreeFam" id="TF352754"/>
<dbReference type="PathwayCommons" id="Q96R09"/>
<dbReference type="Reactome" id="R-HSA-9752946">
    <property type="pathway name" value="Expression and translocation of olfactory receptors"/>
</dbReference>
<dbReference type="BioGRID-ORCS" id="390190">
    <property type="hits" value="9 hits in 735 CRISPR screens"/>
</dbReference>
<dbReference type="GeneWiki" id="OR5B2"/>
<dbReference type="GenomeRNAi" id="390190"/>
<dbReference type="Pharos" id="Q96R09">
    <property type="development level" value="Tdark"/>
</dbReference>
<dbReference type="PRO" id="PR:Q96R09"/>
<dbReference type="Proteomes" id="UP000005640">
    <property type="component" value="Chromosome 11"/>
</dbReference>
<dbReference type="RNAct" id="Q96R09">
    <property type="molecule type" value="protein"/>
</dbReference>
<dbReference type="Bgee" id="ENSG00000172365">
    <property type="expression patterns" value="Expressed in descending thoracic aorta and 5 other cell types or tissues"/>
</dbReference>
<dbReference type="GO" id="GO:0005886">
    <property type="term" value="C:plasma membrane"/>
    <property type="evidence" value="ECO:0007669"/>
    <property type="project" value="UniProtKB-SubCell"/>
</dbReference>
<dbReference type="GO" id="GO:0004930">
    <property type="term" value="F:G protein-coupled receptor activity"/>
    <property type="evidence" value="ECO:0007669"/>
    <property type="project" value="UniProtKB-KW"/>
</dbReference>
<dbReference type="GO" id="GO:0005549">
    <property type="term" value="F:odorant binding"/>
    <property type="evidence" value="ECO:0000318"/>
    <property type="project" value="GO_Central"/>
</dbReference>
<dbReference type="GO" id="GO:0004984">
    <property type="term" value="F:olfactory receptor activity"/>
    <property type="evidence" value="ECO:0000318"/>
    <property type="project" value="GO_Central"/>
</dbReference>
<dbReference type="GO" id="GO:0007186">
    <property type="term" value="P:G protein-coupled receptor signaling pathway"/>
    <property type="evidence" value="ECO:0000318"/>
    <property type="project" value="GO_Central"/>
</dbReference>
<dbReference type="GO" id="GO:0007608">
    <property type="term" value="P:sensory perception of smell"/>
    <property type="evidence" value="ECO:0000318"/>
    <property type="project" value="GO_Central"/>
</dbReference>
<dbReference type="CDD" id="cd15407">
    <property type="entry name" value="7tmA_OR5B-like"/>
    <property type="match status" value="1"/>
</dbReference>
<dbReference type="FunFam" id="1.20.1070.10:FF:000003">
    <property type="entry name" value="Olfactory receptor"/>
    <property type="match status" value="1"/>
</dbReference>
<dbReference type="Gene3D" id="1.20.1070.10">
    <property type="entry name" value="Rhodopsin 7-helix transmembrane proteins"/>
    <property type="match status" value="1"/>
</dbReference>
<dbReference type="InterPro" id="IPR000276">
    <property type="entry name" value="GPCR_Rhodpsn"/>
</dbReference>
<dbReference type="InterPro" id="IPR017452">
    <property type="entry name" value="GPCR_Rhodpsn_7TM"/>
</dbReference>
<dbReference type="InterPro" id="IPR000725">
    <property type="entry name" value="Olfact_rcpt"/>
</dbReference>
<dbReference type="PANTHER" id="PTHR48018">
    <property type="entry name" value="OLFACTORY RECEPTOR"/>
    <property type="match status" value="1"/>
</dbReference>
<dbReference type="Pfam" id="PF13853">
    <property type="entry name" value="7tm_4"/>
    <property type="match status" value="1"/>
</dbReference>
<dbReference type="PRINTS" id="PR00237">
    <property type="entry name" value="GPCRRHODOPSN"/>
</dbReference>
<dbReference type="PRINTS" id="PR00245">
    <property type="entry name" value="OLFACTORYR"/>
</dbReference>
<dbReference type="SUPFAM" id="SSF81321">
    <property type="entry name" value="Family A G protein-coupled receptor-like"/>
    <property type="match status" value="1"/>
</dbReference>
<dbReference type="PROSITE" id="PS00237">
    <property type="entry name" value="G_PROTEIN_RECEP_F1_1"/>
    <property type="match status" value="1"/>
</dbReference>
<dbReference type="PROSITE" id="PS50262">
    <property type="entry name" value="G_PROTEIN_RECEP_F1_2"/>
    <property type="match status" value="1"/>
</dbReference>
<proteinExistence type="evidence at transcript level"/>
<comment type="function">
    <text evidence="5">Odorant receptor.</text>
</comment>
<comment type="subcellular location">
    <subcellularLocation>
        <location>Cell membrane</location>
        <topology>Multi-pass membrane protein</topology>
    </subcellularLocation>
</comment>
<comment type="similarity">
    <text evidence="2">Belongs to the G-protein coupled receptor 1 family.</text>
</comment>
<comment type="online information" name="Human Olfactory Receptor Data Exploratorium (HORDE)">
    <link uri="http://genome.weizmann.ac.il/horde/card/index/symbol:OR5B2"/>
</comment>
<organism>
    <name type="scientific">Homo sapiens</name>
    <name type="common">Human</name>
    <dbReference type="NCBI Taxonomy" id="9606"/>
    <lineage>
        <taxon>Eukaryota</taxon>
        <taxon>Metazoa</taxon>
        <taxon>Chordata</taxon>
        <taxon>Craniata</taxon>
        <taxon>Vertebrata</taxon>
        <taxon>Euteleostomi</taxon>
        <taxon>Mammalia</taxon>
        <taxon>Eutheria</taxon>
        <taxon>Euarchontoglires</taxon>
        <taxon>Primates</taxon>
        <taxon>Haplorrhini</taxon>
        <taxon>Catarrhini</taxon>
        <taxon>Hominidae</taxon>
        <taxon>Homo</taxon>
    </lineage>
</organism>